<gene>
    <name type="primary">denr</name>
    <name type="ORF">zgc:92629</name>
</gene>
<organism>
    <name type="scientific">Danio rerio</name>
    <name type="common">Zebrafish</name>
    <name type="synonym">Brachydanio rerio</name>
    <dbReference type="NCBI Taxonomy" id="7955"/>
    <lineage>
        <taxon>Eukaryota</taxon>
        <taxon>Metazoa</taxon>
        <taxon>Chordata</taxon>
        <taxon>Craniata</taxon>
        <taxon>Vertebrata</taxon>
        <taxon>Euteleostomi</taxon>
        <taxon>Actinopterygii</taxon>
        <taxon>Neopterygii</taxon>
        <taxon>Teleostei</taxon>
        <taxon>Ostariophysi</taxon>
        <taxon>Cypriniformes</taxon>
        <taxon>Danionidae</taxon>
        <taxon>Danioninae</taxon>
        <taxon>Danio</taxon>
    </lineage>
</organism>
<keyword id="KW-0396">Initiation factor</keyword>
<keyword id="KW-0597">Phosphoprotein</keyword>
<keyword id="KW-0648">Protein biosynthesis</keyword>
<keyword id="KW-1185">Reference proteome</keyword>
<comment type="function">
    <text evidence="1">May be involved in the translation of target mRNAs by scanning and recognition of the initiation codon. Involved in translation initiation; promotes recruitment of aminoacetyled initiator tRNA to P site of 40S ribosomes. Can promote release of deacylated tRNA and mRNA from recycled 40S subunits following ABCE1-mediated dissociation of post-termination ribosomal complexes into subunits (By similarity).</text>
</comment>
<comment type="similarity">
    <text evidence="5">Belongs to the DENR family.</text>
</comment>
<accession>Q6DH65</accession>
<dbReference type="EMBL" id="BC076117">
    <property type="protein sequence ID" value="AAH76117.1"/>
    <property type="molecule type" value="mRNA"/>
</dbReference>
<dbReference type="EMBL" id="BC095896">
    <property type="protein sequence ID" value="AAH95896.1"/>
    <property type="molecule type" value="mRNA"/>
</dbReference>
<dbReference type="RefSeq" id="NP_001002697.1">
    <property type="nucleotide sequence ID" value="NM_001002697.2"/>
</dbReference>
<dbReference type="SMR" id="Q6DH65"/>
<dbReference type="FunCoup" id="Q6DH65">
    <property type="interactions" value="1853"/>
</dbReference>
<dbReference type="STRING" id="7955.ENSDARP00000149057"/>
<dbReference type="iPTMnet" id="Q6DH65"/>
<dbReference type="PaxDb" id="7955-ENSDARP00000054152"/>
<dbReference type="Ensembl" id="ENSDART00000054153">
    <property type="protein sequence ID" value="ENSDARP00000054152"/>
    <property type="gene ID" value="ENSDARG00000037229"/>
</dbReference>
<dbReference type="Ensembl" id="ENSDART00000181517">
    <property type="protein sequence ID" value="ENSDARP00000149057"/>
    <property type="gene ID" value="ENSDARG00000037229"/>
</dbReference>
<dbReference type="GeneID" id="436970"/>
<dbReference type="KEGG" id="dre:436970"/>
<dbReference type="AGR" id="ZFIN:ZDB-GENE-040718-450"/>
<dbReference type="CTD" id="8562"/>
<dbReference type="ZFIN" id="ZDB-GENE-040718-450">
    <property type="gene designation" value="denr"/>
</dbReference>
<dbReference type="eggNOG" id="KOG3239">
    <property type="taxonomic scope" value="Eukaryota"/>
</dbReference>
<dbReference type="HOGENOM" id="CLU_073511_1_0_1"/>
<dbReference type="InParanoid" id="Q6DH65"/>
<dbReference type="OMA" id="PIKVQYC"/>
<dbReference type="PhylomeDB" id="Q6DH65"/>
<dbReference type="TreeFam" id="TF105912"/>
<dbReference type="PRO" id="PR:Q6DH65"/>
<dbReference type="Proteomes" id="UP000000437">
    <property type="component" value="Chromosome 10"/>
</dbReference>
<dbReference type="Bgee" id="ENSDARG00000037229">
    <property type="expression patterns" value="Expressed in somite and 31 other cell types or tissues"/>
</dbReference>
<dbReference type="GO" id="GO:0003743">
    <property type="term" value="F:translation initiation factor activity"/>
    <property type="evidence" value="ECO:0007669"/>
    <property type="project" value="UniProtKB-KW"/>
</dbReference>
<dbReference type="GO" id="GO:0001731">
    <property type="term" value="P:formation of translation preinitiation complex"/>
    <property type="evidence" value="ECO:0000318"/>
    <property type="project" value="GO_Central"/>
</dbReference>
<dbReference type="GO" id="GO:0002188">
    <property type="term" value="P:translation reinitiation"/>
    <property type="evidence" value="ECO:0000318"/>
    <property type="project" value="GO_Central"/>
</dbReference>
<dbReference type="CDD" id="cd11607">
    <property type="entry name" value="DENR_C"/>
    <property type="match status" value="1"/>
</dbReference>
<dbReference type="FunFam" id="3.30.780.10:FF:000004">
    <property type="entry name" value="density-regulated protein-like"/>
    <property type="match status" value="1"/>
</dbReference>
<dbReference type="Gene3D" id="3.30.780.10">
    <property type="entry name" value="SUI1-like domain"/>
    <property type="match status" value="1"/>
</dbReference>
<dbReference type="InterPro" id="IPR050318">
    <property type="entry name" value="DENR/SUI1_TIF"/>
</dbReference>
<dbReference type="InterPro" id="IPR046447">
    <property type="entry name" value="DENR_C"/>
</dbReference>
<dbReference type="InterPro" id="IPR005873">
    <property type="entry name" value="DENR_eukaryotes"/>
</dbReference>
<dbReference type="InterPro" id="IPR048517">
    <property type="entry name" value="DENR_N"/>
</dbReference>
<dbReference type="InterPro" id="IPR001950">
    <property type="entry name" value="SUI1"/>
</dbReference>
<dbReference type="InterPro" id="IPR036877">
    <property type="entry name" value="SUI1_dom_sf"/>
</dbReference>
<dbReference type="NCBIfam" id="TIGR01159">
    <property type="entry name" value="DRP1"/>
    <property type="match status" value="1"/>
</dbReference>
<dbReference type="PANTHER" id="PTHR12789:SF0">
    <property type="entry name" value="DENSITY-REGULATED PROTEIN"/>
    <property type="match status" value="1"/>
</dbReference>
<dbReference type="PANTHER" id="PTHR12789">
    <property type="entry name" value="DENSITY-REGULATED PROTEIN HOMOLOG"/>
    <property type="match status" value="1"/>
</dbReference>
<dbReference type="Pfam" id="PF21023">
    <property type="entry name" value="DENR_N"/>
    <property type="match status" value="1"/>
</dbReference>
<dbReference type="Pfam" id="PF01253">
    <property type="entry name" value="SUI1"/>
    <property type="match status" value="1"/>
</dbReference>
<dbReference type="SUPFAM" id="SSF55159">
    <property type="entry name" value="eIF1-like"/>
    <property type="match status" value="1"/>
</dbReference>
<dbReference type="PROSITE" id="PS50296">
    <property type="entry name" value="SUI1"/>
    <property type="match status" value="1"/>
</dbReference>
<name>DENR_DANRE</name>
<sequence length="208" mass="22804">MATTENAESGSPENKVDRADPDAKYPLKVLYCGVCSLPAEYCEYMPEPAKCKQWLEKNFPDVFAKLTLGTAPKQESKGGGGGEDGGGGRGRGEAPPAGEEEEKKKQKRGGRGQIKQKKKTVPQKVTIAKIPRAKKKYVTRVCGLATFDIELKEAQRFFAQKFSCGASVTAEDEIIIQGDFTDDIIDVIQEKWPEVDDDSIDDLGEVKK</sequence>
<proteinExistence type="evidence at protein level"/>
<feature type="chain" id="PRO_0000130604" description="Density-regulated protein">
    <location>
        <begin position="1"/>
        <end position="208"/>
    </location>
</feature>
<feature type="domain" description="SUI1" evidence="2">
    <location>
        <begin position="125"/>
        <end position="192"/>
    </location>
</feature>
<feature type="region of interest" description="Disordered" evidence="3">
    <location>
        <begin position="1"/>
        <end position="20"/>
    </location>
</feature>
<feature type="region of interest" description="Disordered" evidence="3">
    <location>
        <begin position="69"/>
        <end position="120"/>
    </location>
</feature>
<feature type="compositionally biased region" description="Polar residues" evidence="3">
    <location>
        <begin position="1"/>
        <end position="12"/>
    </location>
</feature>
<feature type="compositionally biased region" description="Gly residues" evidence="3">
    <location>
        <begin position="77"/>
        <end position="89"/>
    </location>
</feature>
<feature type="compositionally biased region" description="Basic residues" evidence="3">
    <location>
        <begin position="105"/>
        <end position="120"/>
    </location>
</feature>
<feature type="modified residue" description="Phosphoserine" evidence="4">
    <location>
        <position position="9"/>
    </location>
</feature>
<protein>
    <recommendedName>
        <fullName>Density-regulated protein</fullName>
        <shortName>DRP</shortName>
    </recommendedName>
</protein>
<evidence type="ECO:0000250" key="1"/>
<evidence type="ECO:0000255" key="2">
    <source>
        <dbReference type="PROSITE-ProRule" id="PRU00200"/>
    </source>
</evidence>
<evidence type="ECO:0000256" key="3">
    <source>
        <dbReference type="SAM" id="MobiDB-lite"/>
    </source>
</evidence>
<evidence type="ECO:0000269" key="4">
    <source>
    </source>
</evidence>
<evidence type="ECO:0000305" key="5"/>
<reference key="1">
    <citation type="submission" date="2005-05" db="EMBL/GenBank/DDBJ databases">
        <authorList>
            <consortium name="NIH - Zebrafish Gene Collection (ZGC) project"/>
        </authorList>
    </citation>
    <scope>NUCLEOTIDE SEQUENCE [LARGE SCALE MRNA]</scope>
    <source>
        <tissue>Embryo</tissue>
        <tissue>Liver</tissue>
    </source>
</reference>
<reference key="2">
    <citation type="journal article" date="2008" name="J. Proteome Res.">
        <title>Online automated in vivo zebrafish phosphoproteomics: from large-scale analysis down to a single embryo.</title>
        <authorList>
            <person name="Lemeer S."/>
            <person name="Pinkse M.W.H."/>
            <person name="Mohammed S."/>
            <person name="van Breukelen B."/>
            <person name="den Hertog J."/>
            <person name="Slijper M."/>
            <person name="Heck A.J.R."/>
        </authorList>
    </citation>
    <scope>PHOSPHORYLATION [LARGE SCALE ANALYSIS] AT SER-9</scope>
    <scope>IDENTIFICATION BY MASS SPECTROMETRY</scope>
    <source>
        <tissue>Embryo</tissue>
    </source>
</reference>